<evidence type="ECO:0000250" key="1">
    <source>
        <dbReference type="UniProtKB" id="Q2LQN9"/>
    </source>
</evidence>
<evidence type="ECO:0000305" key="2"/>
<keyword id="KW-0274">FAD</keyword>
<keyword id="KW-0285">Flavoprotein</keyword>
<keyword id="KW-0560">Oxidoreductase</keyword>
<keyword id="KW-1185">Reference proteome</keyword>
<feature type="chain" id="PRO_0000201188" description="Probable acyl-CoA dehydrogenase FadE25">
    <location>
        <begin position="1"/>
        <end position="389"/>
    </location>
</feature>
<gene>
    <name type="primary">fadE25</name>
    <name type="synonym">acd</name>
    <name type="ordered locus">Rv3274c</name>
    <name type="ORF">MTCY71.14c</name>
</gene>
<reference key="1">
    <citation type="journal article" date="1998" name="Nature">
        <title>Deciphering the biology of Mycobacterium tuberculosis from the complete genome sequence.</title>
        <authorList>
            <person name="Cole S.T."/>
            <person name="Brosch R."/>
            <person name="Parkhill J."/>
            <person name="Garnier T."/>
            <person name="Churcher C.M."/>
            <person name="Harris D.E."/>
            <person name="Gordon S.V."/>
            <person name="Eiglmeier K."/>
            <person name="Gas S."/>
            <person name="Barry C.E. III"/>
            <person name="Tekaia F."/>
            <person name="Badcock K."/>
            <person name="Basham D."/>
            <person name="Brown D."/>
            <person name="Chillingworth T."/>
            <person name="Connor R."/>
            <person name="Davies R.M."/>
            <person name="Devlin K."/>
            <person name="Feltwell T."/>
            <person name="Gentles S."/>
            <person name="Hamlin N."/>
            <person name="Holroyd S."/>
            <person name="Hornsby T."/>
            <person name="Jagels K."/>
            <person name="Krogh A."/>
            <person name="McLean J."/>
            <person name="Moule S."/>
            <person name="Murphy L.D."/>
            <person name="Oliver S."/>
            <person name="Osborne J."/>
            <person name="Quail M.A."/>
            <person name="Rajandream M.A."/>
            <person name="Rogers J."/>
            <person name="Rutter S."/>
            <person name="Seeger K."/>
            <person name="Skelton S."/>
            <person name="Squares S."/>
            <person name="Squares R."/>
            <person name="Sulston J.E."/>
            <person name="Taylor K."/>
            <person name="Whitehead S."/>
            <person name="Barrell B.G."/>
        </authorList>
    </citation>
    <scope>NUCLEOTIDE SEQUENCE [LARGE SCALE GENOMIC DNA]</scope>
    <source>
        <strain>ATCC 25618 / H37Rv</strain>
    </source>
</reference>
<reference key="2">
    <citation type="journal article" date="2011" name="Mol. Cell. Proteomics">
        <title>Proteogenomic analysis of Mycobacterium tuberculosis by high resolution mass spectrometry.</title>
        <authorList>
            <person name="Kelkar D.S."/>
            <person name="Kumar D."/>
            <person name="Kumar P."/>
            <person name="Balakrishnan L."/>
            <person name="Muthusamy B."/>
            <person name="Yadav A.K."/>
            <person name="Shrivastava P."/>
            <person name="Marimuthu A."/>
            <person name="Anand S."/>
            <person name="Sundaram H."/>
            <person name="Kingsbury R."/>
            <person name="Harsha H.C."/>
            <person name="Nair B."/>
            <person name="Prasad T.S."/>
            <person name="Chauhan D.S."/>
            <person name="Katoch K."/>
            <person name="Katoch V.M."/>
            <person name="Kumar P."/>
            <person name="Chaerkady R."/>
            <person name="Ramachandran S."/>
            <person name="Dash D."/>
            <person name="Pandey A."/>
        </authorList>
    </citation>
    <scope>IDENTIFICATION BY MASS SPECTROMETRY [LARGE SCALE ANALYSIS]</scope>
    <source>
        <strain>ATCC 25618 / H37Rv</strain>
    </source>
</reference>
<accession>P9WQG1</accession>
<accession>L0TCB5</accession>
<accession>P63427</accession>
<accession>P96879</accession>
<proteinExistence type="evidence at protein level"/>
<protein>
    <recommendedName>
        <fullName>Probable acyl-CoA dehydrogenase FadE25</fullName>
        <ecNumber>1.3.99.-</ecNumber>
    </recommendedName>
</protein>
<name>ACDP_MYCTU</name>
<comment type="catalytic activity">
    <reaction>
        <text>a 2,3-saturated acyl-CoA + A = a 2,3-dehydroacyl-CoA + AH2</text>
        <dbReference type="Rhea" id="RHEA:48608"/>
        <dbReference type="ChEBI" id="CHEBI:13193"/>
        <dbReference type="ChEBI" id="CHEBI:17499"/>
        <dbReference type="ChEBI" id="CHEBI:60015"/>
        <dbReference type="ChEBI" id="CHEBI:65111"/>
    </reaction>
</comment>
<comment type="cofactor">
    <cofactor evidence="1">
        <name>FAD</name>
        <dbReference type="ChEBI" id="CHEBI:57692"/>
    </cofactor>
</comment>
<comment type="similarity">
    <text evidence="2">Belongs to the acyl-CoA dehydrogenase family.</text>
</comment>
<organism>
    <name type="scientific">Mycobacterium tuberculosis (strain ATCC 25618 / H37Rv)</name>
    <dbReference type="NCBI Taxonomy" id="83332"/>
    <lineage>
        <taxon>Bacteria</taxon>
        <taxon>Bacillati</taxon>
        <taxon>Actinomycetota</taxon>
        <taxon>Actinomycetes</taxon>
        <taxon>Mycobacteriales</taxon>
        <taxon>Mycobacteriaceae</taxon>
        <taxon>Mycobacterium</taxon>
        <taxon>Mycobacterium tuberculosis complex</taxon>
    </lineage>
</organism>
<sequence length="389" mass="41723">MVGWAGNPSFDLFKLPEEHDEMRSAIRALAEKEIAPHAAEVDEKARFPEEALVALNSSGFNAVHIPEEYGGQGADSVATCIVIEEVARVDASASLIPAVNKLGTMGLILRGSEELKKQVLPALAAEGAMASYALSEREAGSDAASMRTRAKADGDHWILNGAKCWITNGGKSTWYTVMAVTDPDRGANGISAFMVHKDDEGFTVGPKERKLGIKGSPTTELYFENCRIPGDRIIGEPGTGFKTALATLDHTRPTIGAQAVGIAQGALDAAIAYTKDRKQFGESISTFQAVQFMLADMAMKVEAARLMVYSAAARAERGEPDLGFISAASKCFASDVAMEVTTDAVQLFGGAGYTTDFPVERFMRDAKITQIYEGTNQIQRVVMSRALLR</sequence>
<dbReference type="EC" id="1.3.99.-"/>
<dbReference type="EMBL" id="AL123456">
    <property type="protein sequence ID" value="CCP46093.1"/>
    <property type="molecule type" value="Genomic_DNA"/>
</dbReference>
<dbReference type="PIR" id="C70979">
    <property type="entry name" value="C70979"/>
</dbReference>
<dbReference type="RefSeq" id="NP_217791.1">
    <property type="nucleotide sequence ID" value="NC_000962.3"/>
</dbReference>
<dbReference type="RefSeq" id="WP_003417122.1">
    <property type="nucleotide sequence ID" value="NZ_NVQJ01000003.1"/>
</dbReference>
<dbReference type="SMR" id="P9WQG1"/>
<dbReference type="FunCoup" id="P9WQG1">
    <property type="interactions" value="342"/>
</dbReference>
<dbReference type="STRING" id="83332.Rv3274c"/>
<dbReference type="PaxDb" id="83332-Rv3274c"/>
<dbReference type="DNASU" id="888731"/>
<dbReference type="GeneID" id="888731"/>
<dbReference type="KEGG" id="mtu:Rv3274c"/>
<dbReference type="KEGG" id="mtv:RVBD_3274c"/>
<dbReference type="TubercuList" id="Rv3274c"/>
<dbReference type="eggNOG" id="COG1960">
    <property type="taxonomic scope" value="Bacteria"/>
</dbReference>
<dbReference type="InParanoid" id="P9WQG1"/>
<dbReference type="OrthoDB" id="8876745at2"/>
<dbReference type="PhylomeDB" id="P9WQG1"/>
<dbReference type="Proteomes" id="UP000001584">
    <property type="component" value="Chromosome"/>
</dbReference>
<dbReference type="GO" id="GO:0005829">
    <property type="term" value="C:cytosol"/>
    <property type="evidence" value="ECO:0007005"/>
    <property type="project" value="MTBBASE"/>
</dbReference>
<dbReference type="GO" id="GO:0009274">
    <property type="term" value="C:peptidoglycan-based cell wall"/>
    <property type="evidence" value="ECO:0007005"/>
    <property type="project" value="MTBBASE"/>
</dbReference>
<dbReference type="GO" id="GO:0005886">
    <property type="term" value="C:plasma membrane"/>
    <property type="evidence" value="ECO:0007005"/>
    <property type="project" value="MTBBASE"/>
</dbReference>
<dbReference type="GO" id="GO:0003995">
    <property type="term" value="F:acyl-CoA dehydrogenase activity"/>
    <property type="evidence" value="ECO:0000318"/>
    <property type="project" value="GO_Central"/>
</dbReference>
<dbReference type="GO" id="GO:0050660">
    <property type="term" value="F:flavin adenine dinucleotide binding"/>
    <property type="evidence" value="ECO:0007669"/>
    <property type="project" value="InterPro"/>
</dbReference>
<dbReference type="CDD" id="cd01158">
    <property type="entry name" value="SCAD_SBCAD"/>
    <property type="match status" value="1"/>
</dbReference>
<dbReference type="FunFam" id="1.10.540.10:FF:000023">
    <property type="entry name" value="Acyl-CoA dehydrogenase FadE25"/>
    <property type="match status" value="1"/>
</dbReference>
<dbReference type="FunFam" id="1.20.140.10:FF:000004">
    <property type="entry name" value="Acyl-CoA dehydrogenase FadE25"/>
    <property type="match status" value="1"/>
</dbReference>
<dbReference type="FunFam" id="2.40.110.10:FF:000001">
    <property type="entry name" value="Acyl-CoA dehydrogenase, mitochondrial"/>
    <property type="match status" value="1"/>
</dbReference>
<dbReference type="Gene3D" id="1.10.540.10">
    <property type="entry name" value="Acyl-CoA dehydrogenase/oxidase, N-terminal domain"/>
    <property type="match status" value="1"/>
</dbReference>
<dbReference type="Gene3D" id="2.40.110.10">
    <property type="entry name" value="Butyryl-CoA Dehydrogenase, subunit A, domain 2"/>
    <property type="match status" value="1"/>
</dbReference>
<dbReference type="Gene3D" id="1.20.140.10">
    <property type="entry name" value="Butyryl-CoA Dehydrogenase, subunit A, domain 3"/>
    <property type="match status" value="1"/>
</dbReference>
<dbReference type="InterPro" id="IPR006089">
    <property type="entry name" value="Acyl-CoA_DH_CS"/>
</dbReference>
<dbReference type="InterPro" id="IPR006091">
    <property type="entry name" value="Acyl-CoA_Oxase/DH_mid-dom"/>
</dbReference>
<dbReference type="InterPro" id="IPR046373">
    <property type="entry name" value="Acyl-CoA_Oxase/DH_mid-dom_sf"/>
</dbReference>
<dbReference type="InterPro" id="IPR036250">
    <property type="entry name" value="AcylCo_DH-like_C"/>
</dbReference>
<dbReference type="InterPro" id="IPR009075">
    <property type="entry name" value="AcylCo_DH/oxidase_C"/>
</dbReference>
<dbReference type="InterPro" id="IPR013786">
    <property type="entry name" value="AcylCoA_DH/ox_N"/>
</dbReference>
<dbReference type="InterPro" id="IPR037069">
    <property type="entry name" value="AcylCoA_DH/ox_N_sf"/>
</dbReference>
<dbReference type="InterPro" id="IPR009100">
    <property type="entry name" value="AcylCoA_DH/oxidase_NM_dom_sf"/>
</dbReference>
<dbReference type="PANTHER" id="PTHR43884">
    <property type="entry name" value="ACYL-COA DEHYDROGENASE"/>
    <property type="match status" value="1"/>
</dbReference>
<dbReference type="PANTHER" id="PTHR43884:SF12">
    <property type="entry name" value="ISOVALERYL-COA DEHYDROGENASE, MITOCHONDRIAL-RELATED"/>
    <property type="match status" value="1"/>
</dbReference>
<dbReference type="Pfam" id="PF00441">
    <property type="entry name" value="Acyl-CoA_dh_1"/>
    <property type="match status" value="1"/>
</dbReference>
<dbReference type="Pfam" id="PF02770">
    <property type="entry name" value="Acyl-CoA_dh_M"/>
    <property type="match status" value="1"/>
</dbReference>
<dbReference type="Pfam" id="PF02771">
    <property type="entry name" value="Acyl-CoA_dh_N"/>
    <property type="match status" value="1"/>
</dbReference>
<dbReference type="PIRSF" id="PIRSF016578">
    <property type="entry name" value="HsaA"/>
    <property type="match status" value="1"/>
</dbReference>
<dbReference type="SUPFAM" id="SSF47203">
    <property type="entry name" value="Acyl-CoA dehydrogenase C-terminal domain-like"/>
    <property type="match status" value="1"/>
</dbReference>
<dbReference type="SUPFAM" id="SSF56645">
    <property type="entry name" value="Acyl-CoA dehydrogenase NM domain-like"/>
    <property type="match status" value="1"/>
</dbReference>
<dbReference type="PROSITE" id="PS00072">
    <property type="entry name" value="ACYL_COA_DH_1"/>
    <property type="match status" value="1"/>
</dbReference>
<dbReference type="PROSITE" id="PS00073">
    <property type="entry name" value="ACYL_COA_DH_2"/>
    <property type="match status" value="1"/>
</dbReference>